<reference key="1">
    <citation type="journal article" date="2002" name="Proc. Natl. Acad. Sci. U.S.A.">
        <title>Extensive mosaic structure revealed by the complete genome sequence of uropathogenic Escherichia coli.</title>
        <authorList>
            <person name="Welch R.A."/>
            <person name="Burland V."/>
            <person name="Plunkett G. III"/>
            <person name="Redford P."/>
            <person name="Roesch P."/>
            <person name="Rasko D."/>
            <person name="Buckles E.L."/>
            <person name="Liou S.-R."/>
            <person name="Boutin A."/>
            <person name="Hackett J."/>
            <person name="Stroud D."/>
            <person name="Mayhew G.F."/>
            <person name="Rose D.J."/>
            <person name="Zhou S."/>
            <person name="Schwartz D.C."/>
            <person name="Perna N.T."/>
            <person name="Mobley H.L.T."/>
            <person name="Donnenberg M.S."/>
            <person name="Blattner F.R."/>
        </authorList>
    </citation>
    <scope>NUCLEOTIDE SEQUENCE [LARGE SCALE GENOMIC DNA]</scope>
    <source>
        <strain>CFT073 / ATCC 700928 / UPEC</strain>
    </source>
</reference>
<feature type="chain" id="PRO_0000161860" description="tRNA/tmRNA (uracil-C(5))-methyltransferase">
    <location>
        <begin position="1"/>
        <end position="366"/>
    </location>
</feature>
<feature type="active site" description="Nucleophile" evidence="1">
    <location>
        <position position="324"/>
    </location>
</feature>
<feature type="active site" description="Proton acceptor" evidence="1">
    <location>
        <position position="358"/>
    </location>
</feature>
<feature type="binding site" evidence="1">
    <location>
        <position position="190"/>
    </location>
    <ligand>
        <name>S-adenosyl-L-methionine</name>
        <dbReference type="ChEBI" id="CHEBI:59789"/>
    </ligand>
</feature>
<feature type="binding site" evidence="1">
    <location>
        <position position="218"/>
    </location>
    <ligand>
        <name>S-adenosyl-L-methionine</name>
        <dbReference type="ChEBI" id="CHEBI:59789"/>
    </ligand>
</feature>
<feature type="binding site" evidence="1">
    <location>
        <position position="223"/>
    </location>
    <ligand>
        <name>S-adenosyl-L-methionine</name>
        <dbReference type="ChEBI" id="CHEBI:59789"/>
    </ligand>
</feature>
<feature type="binding site" evidence="1">
    <location>
        <position position="239"/>
    </location>
    <ligand>
        <name>S-adenosyl-L-methionine</name>
        <dbReference type="ChEBI" id="CHEBI:59789"/>
    </ligand>
</feature>
<feature type="binding site" evidence="1">
    <location>
        <position position="299"/>
    </location>
    <ligand>
        <name>S-adenosyl-L-methionine</name>
        <dbReference type="ChEBI" id="CHEBI:59789"/>
    </ligand>
</feature>
<name>TRMA_ECOL6</name>
<protein>
    <recommendedName>
        <fullName evidence="1">tRNA/tmRNA (uracil-C(5))-methyltransferase</fullName>
        <ecNumber evidence="1">2.1.1.-</ecNumber>
        <ecNumber evidence="1">2.1.1.35</ecNumber>
    </recommendedName>
    <alternativeName>
        <fullName evidence="1">tRNA (uracil(54)-C(5))-methyltransferase</fullName>
    </alternativeName>
    <alternativeName>
        <fullName evidence="1">tRNA(m5U54)-methyltransferase</fullName>
        <shortName evidence="1">RUMT</shortName>
    </alternativeName>
    <alternativeName>
        <fullName evidence="1">tmRNA (uracil(341)-C(5))-methyltransferase</fullName>
    </alternativeName>
</protein>
<gene>
    <name evidence="1" type="primary">trmA</name>
    <name type="ordered locus">c4928</name>
</gene>
<sequence length="366" mass="42005">MTPEHLPTEQYEAQLAEKVVRLQSMMAPFSDLVPEVFRSPVSHYRMRAEFRIWHDGDDLYHIIFDQQTKSRIRVDSFPAASELINQLMTAMIAGVRNNPILRHKLFQIDYLTTLRNQAVVSLLYHKKLDDEWRQQAEALRDALRAQNLNVHLIGRATKTKIALDQDYIDERLPIAGKEMIYRQVENSFTQPNAAMNIQMLEWALDVTKGSKGDLLELYCGNGNFSLALARNFDRVLATEIAKPSVAAAQYNIAANHIDNVQIIRMAAEEFTQAMNGVREFNRLQGIDLKSYQCETIFVDPPRSGLDSETEKMVQAYPRILYISCNPETLCKNLETLSQTHKVERLALFDQFPYTHHMECGVLLTAK</sequence>
<comment type="function">
    <text evidence="1">Dual-specificity methyltransferase that catalyzes the formation of 5-methyluridine at position 54 (m5U54) in all tRNAs, and that of position 341 (m5U341) in tmRNA (transfer-mRNA).</text>
</comment>
<comment type="catalytic activity">
    <reaction evidence="1">
        <text>uridine(54) in tRNA + S-adenosyl-L-methionine = 5-methyluridine(54) in tRNA + S-adenosyl-L-homocysteine + H(+)</text>
        <dbReference type="Rhea" id="RHEA:42712"/>
        <dbReference type="Rhea" id="RHEA-COMP:10167"/>
        <dbReference type="Rhea" id="RHEA-COMP:10193"/>
        <dbReference type="ChEBI" id="CHEBI:15378"/>
        <dbReference type="ChEBI" id="CHEBI:57856"/>
        <dbReference type="ChEBI" id="CHEBI:59789"/>
        <dbReference type="ChEBI" id="CHEBI:65315"/>
        <dbReference type="ChEBI" id="CHEBI:74447"/>
        <dbReference type="EC" id="2.1.1.35"/>
    </reaction>
</comment>
<comment type="catalytic activity">
    <reaction evidence="1">
        <text>uridine(341) in tmRNA + S-adenosyl-L-methionine = 5-methyluridine(341) in tmRNA + S-adenosyl-L-homocysteine + H(+)</text>
        <dbReference type="Rhea" id="RHEA:43612"/>
        <dbReference type="Rhea" id="RHEA-COMP:10630"/>
        <dbReference type="Rhea" id="RHEA-COMP:10631"/>
        <dbReference type="ChEBI" id="CHEBI:15378"/>
        <dbReference type="ChEBI" id="CHEBI:57856"/>
        <dbReference type="ChEBI" id="CHEBI:59789"/>
        <dbReference type="ChEBI" id="CHEBI:65315"/>
        <dbReference type="ChEBI" id="CHEBI:74447"/>
    </reaction>
</comment>
<comment type="similarity">
    <text evidence="1">Belongs to the class I-like SAM-binding methyltransferase superfamily. RNA M5U methyltransferase family. TrmA subfamily.</text>
</comment>
<dbReference type="EC" id="2.1.1.-" evidence="1"/>
<dbReference type="EC" id="2.1.1.35" evidence="1"/>
<dbReference type="EMBL" id="AE014075">
    <property type="protein sequence ID" value="AAN83356.1"/>
    <property type="molecule type" value="Genomic_DNA"/>
</dbReference>
<dbReference type="RefSeq" id="WP_000186996.1">
    <property type="nucleotide sequence ID" value="NC_004431.1"/>
</dbReference>
<dbReference type="SMR" id="Q8CXW3"/>
<dbReference type="STRING" id="199310.c4928"/>
<dbReference type="KEGG" id="ecc:c4928"/>
<dbReference type="eggNOG" id="COG2265">
    <property type="taxonomic scope" value="Bacteria"/>
</dbReference>
<dbReference type="HOGENOM" id="CLU_043022_0_0_6"/>
<dbReference type="BioCyc" id="ECOL199310:C4928-MONOMER"/>
<dbReference type="Proteomes" id="UP000001410">
    <property type="component" value="Chromosome"/>
</dbReference>
<dbReference type="GO" id="GO:0005829">
    <property type="term" value="C:cytosol"/>
    <property type="evidence" value="ECO:0007669"/>
    <property type="project" value="TreeGrafter"/>
</dbReference>
<dbReference type="GO" id="GO:0019843">
    <property type="term" value="F:rRNA binding"/>
    <property type="evidence" value="ECO:0007669"/>
    <property type="project" value="TreeGrafter"/>
</dbReference>
<dbReference type="GO" id="GO:0030697">
    <property type="term" value="F:tRNA (uracil(54)-C5)-methyltransferase activity, S-adenosyl methionine-dependent"/>
    <property type="evidence" value="ECO:0007669"/>
    <property type="project" value="UniProtKB-UniRule"/>
</dbReference>
<dbReference type="GO" id="GO:0000049">
    <property type="term" value="F:tRNA binding"/>
    <property type="evidence" value="ECO:0007669"/>
    <property type="project" value="TreeGrafter"/>
</dbReference>
<dbReference type="GO" id="GO:0030488">
    <property type="term" value="P:tRNA methylation"/>
    <property type="evidence" value="ECO:0007669"/>
    <property type="project" value="UniProtKB-UniRule"/>
</dbReference>
<dbReference type="CDD" id="cd02440">
    <property type="entry name" value="AdoMet_MTases"/>
    <property type="match status" value="1"/>
</dbReference>
<dbReference type="FunFam" id="2.40.50.1070:FF:000001">
    <property type="entry name" value="tRNA/tmRNA (uracil-C(5))-methyltransferase"/>
    <property type="match status" value="1"/>
</dbReference>
<dbReference type="FunFam" id="3.40.50.150:FF:000012">
    <property type="entry name" value="tRNA/tmRNA (uracil-C(5))-methyltransferase"/>
    <property type="match status" value="1"/>
</dbReference>
<dbReference type="Gene3D" id="2.40.50.1070">
    <property type="match status" value="1"/>
</dbReference>
<dbReference type="Gene3D" id="3.40.50.150">
    <property type="entry name" value="Vaccinia Virus protein VP39"/>
    <property type="match status" value="1"/>
</dbReference>
<dbReference type="HAMAP" id="MF_01011">
    <property type="entry name" value="RNA_methyltr_TrmA"/>
    <property type="match status" value="1"/>
</dbReference>
<dbReference type="InterPro" id="IPR030390">
    <property type="entry name" value="MeTrfase_TrmA_AS"/>
</dbReference>
<dbReference type="InterPro" id="IPR030391">
    <property type="entry name" value="MeTrfase_TrmA_CS"/>
</dbReference>
<dbReference type="InterPro" id="IPR029063">
    <property type="entry name" value="SAM-dependent_MTases_sf"/>
</dbReference>
<dbReference type="InterPro" id="IPR011869">
    <property type="entry name" value="TrmA_MeTrfase"/>
</dbReference>
<dbReference type="InterPro" id="IPR010280">
    <property type="entry name" value="U5_MeTrfase_fam"/>
</dbReference>
<dbReference type="NCBIfam" id="TIGR02143">
    <property type="entry name" value="trmA_only"/>
    <property type="match status" value="1"/>
</dbReference>
<dbReference type="PANTHER" id="PTHR47790">
    <property type="entry name" value="TRNA/TMRNA (URACIL-C(5))-METHYLTRANSFERASE"/>
    <property type="match status" value="1"/>
</dbReference>
<dbReference type="PANTHER" id="PTHR47790:SF2">
    <property type="entry name" value="TRNA_TMRNA (URACIL-C(5))-METHYLTRANSFERASE"/>
    <property type="match status" value="1"/>
</dbReference>
<dbReference type="Pfam" id="PF05958">
    <property type="entry name" value="tRNA_U5-meth_tr"/>
    <property type="match status" value="1"/>
</dbReference>
<dbReference type="SUPFAM" id="SSF53335">
    <property type="entry name" value="S-adenosyl-L-methionine-dependent methyltransferases"/>
    <property type="match status" value="1"/>
</dbReference>
<dbReference type="PROSITE" id="PS51687">
    <property type="entry name" value="SAM_MT_RNA_M5U"/>
    <property type="match status" value="1"/>
</dbReference>
<dbReference type="PROSITE" id="PS01230">
    <property type="entry name" value="TRMA_1"/>
    <property type="match status" value="1"/>
</dbReference>
<dbReference type="PROSITE" id="PS01231">
    <property type="entry name" value="TRMA_2"/>
    <property type="match status" value="1"/>
</dbReference>
<evidence type="ECO:0000255" key="1">
    <source>
        <dbReference type="HAMAP-Rule" id="MF_01011"/>
    </source>
</evidence>
<proteinExistence type="inferred from homology"/>
<accession>Q8CXW3</accession>
<keyword id="KW-0489">Methyltransferase</keyword>
<keyword id="KW-1185">Reference proteome</keyword>
<keyword id="KW-0949">S-adenosyl-L-methionine</keyword>
<keyword id="KW-0808">Transferase</keyword>
<keyword id="KW-0819">tRNA processing</keyword>
<organism>
    <name type="scientific">Escherichia coli O6:H1 (strain CFT073 / ATCC 700928 / UPEC)</name>
    <dbReference type="NCBI Taxonomy" id="199310"/>
    <lineage>
        <taxon>Bacteria</taxon>
        <taxon>Pseudomonadati</taxon>
        <taxon>Pseudomonadota</taxon>
        <taxon>Gammaproteobacteria</taxon>
        <taxon>Enterobacterales</taxon>
        <taxon>Enterobacteriaceae</taxon>
        <taxon>Escherichia</taxon>
    </lineage>
</organism>